<proteinExistence type="inferred from homology"/>
<name>RLUB_PASMU</name>
<gene>
    <name type="primary">rluB</name>
    <name type="ordered locus">PM0661</name>
</gene>
<feature type="chain" id="PRO_0000099987" description="Ribosomal large subunit pseudouridine synthase B">
    <location>
        <begin position="1"/>
        <end position="345"/>
    </location>
</feature>
<feature type="domain" description="S4 RNA-binding" evidence="2">
    <location>
        <begin position="64"/>
        <end position="136"/>
    </location>
</feature>
<feature type="region of interest" description="Disordered" evidence="3">
    <location>
        <begin position="1"/>
        <end position="60"/>
    </location>
</feature>
<feature type="compositionally biased region" description="Polar residues" evidence="3">
    <location>
        <begin position="1"/>
        <end position="10"/>
    </location>
</feature>
<feature type="active site" description="Nucleophile" evidence="1">
    <location>
        <position position="171"/>
    </location>
</feature>
<accession>Q9CMY9</accession>
<evidence type="ECO:0000250" key="1"/>
<evidence type="ECO:0000255" key="2">
    <source>
        <dbReference type="PROSITE-ProRule" id="PRU00182"/>
    </source>
</evidence>
<evidence type="ECO:0000256" key="3">
    <source>
        <dbReference type="SAM" id="MobiDB-lite"/>
    </source>
</evidence>
<evidence type="ECO:0000305" key="4"/>
<comment type="function">
    <text evidence="1">Responsible for synthesis of pseudouridine from uracil-2605 in 23S ribosomal RNA.</text>
</comment>
<comment type="catalytic activity">
    <reaction>
        <text>uridine(2605) in 23S rRNA = pseudouridine(2605) in 23S rRNA</text>
        <dbReference type="Rhea" id="RHEA:42520"/>
        <dbReference type="Rhea" id="RHEA-COMP:10095"/>
        <dbReference type="Rhea" id="RHEA-COMP:10096"/>
        <dbReference type="ChEBI" id="CHEBI:65314"/>
        <dbReference type="ChEBI" id="CHEBI:65315"/>
        <dbReference type="EC" id="5.4.99.22"/>
    </reaction>
</comment>
<comment type="similarity">
    <text evidence="4">Belongs to the pseudouridine synthase RsuA family.</text>
</comment>
<organism>
    <name type="scientific">Pasteurella multocida (strain Pm70)</name>
    <dbReference type="NCBI Taxonomy" id="272843"/>
    <lineage>
        <taxon>Bacteria</taxon>
        <taxon>Pseudomonadati</taxon>
        <taxon>Pseudomonadota</taxon>
        <taxon>Gammaproteobacteria</taxon>
        <taxon>Pasteurellales</taxon>
        <taxon>Pasteurellaceae</taxon>
        <taxon>Pasteurella</taxon>
    </lineage>
</organism>
<keyword id="KW-0413">Isomerase</keyword>
<keyword id="KW-1185">Reference proteome</keyword>
<keyword id="KW-0694">RNA-binding</keyword>
<keyword id="KW-0698">rRNA processing</keyword>
<dbReference type="EC" id="5.4.99.22"/>
<dbReference type="EMBL" id="AE004439">
    <property type="protein sequence ID" value="AAK02745.1"/>
    <property type="molecule type" value="Genomic_DNA"/>
</dbReference>
<dbReference type="SMR" id="Q9CMY9"/>
<dbReference type="STRING" id="272843.PM0661"/>
<dbReference type="EnsemblBacteria" id="AAK02745">
    <property type="protein sequence ID" value="AAK02745"/>
    <property type="gene ID" value="PM0661"/>
</dbReference>
<dbReference type="KEGG" id="pmu:PM0661"/>
<dbReference type="PATRIC" id="fig|272843.6.peg.669"/>
<dbReference type="HOGENOM" id="CLU_024979_1_1_6"/>
<dbReference type="OrthoDB" id="9807213at2"/>
<dbReference type="Proteomes" id="UP000000809">
    <property type="component" value="Chromosome"/>
</dbReference>
<dbReference type="GO" id="GO:0160139">
    <property type="term" value="F:23S rRNA pseudouridine(2605) synthase activity"/>
    <property type="evidence" value="ECO:0007669"/>
    <property type="project" value="UniProtKB-EC"/>
</dbReference>
<dbReference type="GO" id="GO:0003723">
    <property type="term" value="F:RNA binding"/>
    <property type="evidence" value="ECO:0007669"/>
    <property type="project" value="UniProtKB-KW"/>
</dbReference>
<dbReference type="GO" id="GO:0000455">
    <property type="term" value="P:enzyme-directed rRNA pseudouridine synthesis"/>
    <property type="evidence" value="ECO:0007669"/>
    <property type="project" value="UniProtKB-ARBA"/>
</dbReference>
<dbReference type="CDD" id="cd02556">
    <property type="entry name" value="PseudoU_synth_RluB"/>
    <property type="match status" value="1"/>
</dbReference>
<dbReference type="CDD" id="cd00165">
    <property type="entry name" value="S4"/>
    <property type="match status" value="1"/>
</dbReference>
<dbReference type="FunFam" id="3.10.290.10:FF:000003">
    <property type="entry name" value="Pseudouridine synthase"/>
    <property type="match status" value="1"/>
</dbReference>
<dbReference type="FunFam" id="3.30.70.1560:FF:000001">
    <property type="entry name" value="Pseudouridine synthase"/>
    <property type="match status" value="1"/>
</dbReference>
<dbReference type="FunFam" id="3.30.70.580:FF:000009">
    <property type="entry name" value="Pseudouridine synthase"/>
    <property type="match status" value="1"/>
</dbReference>
<dbReference type="Gene3D" id="3.30.2350.10">
    <property type="entry name" value="Pseudouridine synthase"/>
    <property type="match status" value="1"/>
</dbReference>
<dbReference type="Gene3D" id="3.10.290.10">
    <property type="entry name" value="RNA-binding S4 domain"/>
    <property type="match status" value="1"/>
</dbReference>
<dbReference type="InterPro" id="IPR020103">
    <property type="entry name" value="PsdUridine_synth_cat_dom_sf"/>
</dbReference>
<dbReference type="InterPro" id="IPR006145">
    <property type="entry name" value="PsdUridine_synth_RsuA/RluA"/>
</dbReference>
<dbReference type="InterPro" id="IPR000748">
    <property type="entry name" value="PsdUridine_synth_RsuA/RluB/E/F"/>
</dbReference>
<dbReference type="InterPro" id="IPR018496">
    <property type="entry name" value="PsdUridine_synth_RsuA/RluB_CS"/>
</dbReference>
<dbReference type="InterPro" id="IPR050343">
    <property type="entry name" value="RsuA_PseudoU_synthase"/>
</dbReference>
<dbReference type="InterPro" id="IPR002942">
    <property type="entry name" value="S4_RNA-bd"/>
</dbReference>
<dbReference type="InterPro" id="IPR036986">
    <property type="entry name" value="S4_RNA-bd_sf"/>
</dbReference>
<dbReference type="NCBIfam" id="NF007976">
    <property type="entry name" value="PRK10700.1"/>
    <property type="match status" value="1"/>
</dbReference>
<dbReference type="NCBIfam" id="TIGR00093">
    <property type="entry name" value="pseudouridine synthase"/>
    <property type="match status" value="1"/>
</dbReference>
<dbReference type="PANTHER" id="PTHR47683">
    <property type="entry name" value="PSEUDOURIDINE SYNTHASE FAMILY PROTEIN-RELATED"/>
    <property type="match status" value="1"/>
</dbReference>
<dbReference type="PANTHER" id="PTHR47683:SF3">
    <property type="entry name" value="RIBOSOMAL LARGE SUBUNIT PSEUDOURIDINE SYNTHASE B"/>
    <property type="match status" value="1"/>
</dbReference>
<dbReference type="Pfam" id="PF00849">
    <property type="entry name" value="PseudoU_synth_2"/>
    <property type="match status" value="1"/>
</dbReference>
<dbReference type="Pfam" id="PF01479">
    <property type="entry name" value="S4"/>
    <property type="match status" value="1"/>
</dbReference>
<dbReference type="SMART" id="SM00363">
    <property type="entry name" value="S4"/>
    <property type="match status" value="1"/>
</dbReference>
<dbReference type="SUPFAM" id="SSF55174">
    <property type="entry name" value="Alpha-L RNA-binding motif"/>
    <property type="match status" value="1"/>
</dbReference>
<dbReference type="SUPFAM" id="SSF55120">
    <property type="entry name" value="Pseudouridine synthase"/>
    <property type="match status" value="1"/>
</dbReference>
<dbReference type="PROSITE" id="PS01149">
    <property type="entry name" value="PSI_RSU"/>
    <property type="match status" value="1"/>
</dbReference>
<dbReference type="PROSITE" id="PS50889">
    <property type="entry name" value="S4"/>
    <property type="match status" value="1"/>
</dbReference>
<reference key="1">
    <citation type="journal article" date="2001" name="Proc. Natl. Acad. Sci. U.S.A.">
        <title>Complete genomic sequence of Pasteurella multocida Pm70.</title>
        <authorList>
            <person name="May B.J."/>
            <person name="Zhang Q."/>
            <person name="Li L.L."/>
            <person name="Paustian M.L."/>
            <person name="Whittam T.S."/>
            <person name="Kapur V."/>
        </authorList>
    </citation>
    <scope>NUCLEOTIDE SEQUENCE [LARGE SCALE GENOMIC DNA]</scope>
    <source>
        <strain>Pm70</strain>
    </source>
</reference>
<sequence>MKFTKPNSRQNKPHVEQKTSRRSTNANAVASKNVKKVTEAQPKSVKASTHSVKPTVKNPLVEGEKLQKVLARAGQGSRREIEAMIAENRVSVDGKIATLGDRIDVHAGVKIRIDGHLINLLHAQKEVCRVLMYYKPEGELCTRHDPEGRPTVFDRLPRLTGSRWIAVGRLDINTSGLLLFTTDGELANRLMHPSREVEREYSVRVFGQVDEAMLHRLKKGVQLEDGPANFKEIKFAGGVGMNQWFDVTLMEGRNREVRRLWESQGVQVSRLIRTRYGNISLMKSLPRGGWEEMDLTNVNYLRELVGLPAEVETKLDVTKPRRRAKTGQIRKAVKRYAELNKRYKK</sequence>
<protein>
    <recommendedName>
        <fullName>Ribosomal large subunit pseudouridine synthase B</fullName>
        <ecNumber>5.4.99.22</ecNumber>
    </recommendedName>
    <alternativeName>
        <fullName>23S rRNA pseudouridine(2605) synthase</fullName>
    </alternativeName>
    <alternativeName>
        <fullName>rRNA pseudouridylate synthase B</fullName>
    </alternativeName>
    <alternativeName>
        <fullName>rRNA-uridine isomerase B</fullName>
    </alternativeName>
</protein>